<keyword id="KW-0235">DNA replication</keyword>
<keyword id="KW-0238">DNA-binding</keyword>
<keyword id="KW-1185">Reference proteome</keyword>
<accession>Q9HJQ0</accession>
<evidence type="ECO:0000255" key="1">
    <source>
        <dbReference type="HAMAP-Rule" id="MF_00317"/>
    </source>
</evidence>
<evidence type="ECO:0000305" key="2"/>
<gene>
    <name evidence="1" type="primary">pcn</name>
    <name type="ordered locus">Ta0917</name>
</gene>
<name>PCNA_THEAC</name>
<reference key="1">
    <citation type="journal article" date="2000" name="Nature">
        <title>The genome sequence of the thermoacidophilic scavenger Thermoplasma acidophilum.</title>
        <authorList>
            <person name="Ruepp A."/>
            <person name="Graml W."/>
            <person name="Santos-Martinez M.-L."/>
            <person name="Koretke K.K."/>
            <person name="Volker C."/>
            <person name="Mewes H.-W."/>
            <person name="Frishman D."/>
            <person name="Stocker S."/>
            <person name="Lupas A.N."/>
            <person name="Baumeister W."/>
        </authorList>
    </citation>
    <scope>NUCLEOTIDE SEQUENCE [LARGE SCALE GENOMIC DNA]</scope>
    <source>
        <strain>ATCC 25905 / DSM 1728 / JCM 9062 / NBRC 15155 / AMRC-C165</strain>
    </source>
</reference>
<protein>
    <recommendedName>
        <fullName evidence="1">DNA polymerase sliding clamp</fullName>
    </recommendedName>
    <alternativeName>
        <fullName evidence="1">Proliferating cell nuclear antigen homolog</fullName>
        <shortName evidence="1">PCNA</shortName>
    </alternativeName>
</protein>
<feature type="chain" id="PRO_0000149220" description="DNA polymerase sliding clamp">
    <location>
        <begin position="1"/>
        <end position="246"/>
    </location>
</feature>
<comment type="function">
    <text evidence="1">Sliding clamp subunit that acts as a moving platform for DNA processing. Responsible for tethering the catalytic subunit of DNA polymerase and other proteins to DNA during high-speed replication.</text>
</comment>
<comment type="subunit">
    <text evidence="1">Homotrimer. The subunits circularize to form a toroid; DNA passes through its center. Replication factor C (RFC) is required to load the toroid on the DNA.</text>
</comment>
<comment type="similarity">
    <text evidence="1">Belongs to the PCNA family.</text>
</comment>
<comment type="sequence caution" evidence="2">
    <conflict type="erroneous initiation">
        <sequence resource="EMBL-CDS" id="CAC12046"/>
    </conflict>
    <text>Extended N-terminus.</text>
</comment>
<dbReference type="EMBL" id="AL445065">
    <property type="protein sequence ID" value="CAC12046.1"/>
    <property type="status" value="ALT_INIT"/>
    <property type="molecule type" value="Genomic_DNA"/>
</dbReference>
<dbReference type="SMR" id="Q9HJQ0"/>
<dbReference type="FunCoup" id="Q9HJQ0">
    <property type="interactions" value="149"/>
</dbReference>
<dbReference type="STRING" id="273075.gene:9572133"/>
<dbReference type="PaxDb" id="273075-Ta0917"/>
<dbReference type="EnsemblBacteria" id="CAC12046">
    <property type="protein sequence ID" value="CAC12046"/>
    <property type="gene ID" value="CAC12046"/>
</dbReference>
<dbReference type="KEGG" id="tac:Ta0917"/>
<dbReference type="eggNOG" id="arCOG00488">
    <property type="taxonomic scope" value="Archaea"/>
</dbReference>
<dbReference type="HOGENOM" id="CLU_043978_1_1_2"/>
<dbReference type="InParanoid" id="Q9HJQ0"/>
<dbReference type="OrthoDB" id="14749at2157"/>
<dbReference type="Proteomes" id="UP000001024">
    <property type="component" value="Chromosome"/>
</dbReference>
<dbReference type="GO" id="GO:0003677">
    <property type="term" value="F:DNA binding"/>
    <property type="evidence" value="ECO:0007669"/>
    <property type="project" value="UniProtKB-UniRule"/>
</dbReference>
<dbReference type="GO" id="GO:0030337">
    <property type="term" value="F:DNA polymerase processivity factor activity"/>
    <property type="evidence" value="ECO:0007669"/>
    <property type="project" value="UniProtKB-UniRule"/>
</dbReference>
<dbReference type="GO" id="GO:0006272">
    <property type="term" value="P:leading strand elongation"/>
    <property type="evidence" value="ECO:0007669"/>
    <property type="project" value="TreeGrafter"/>
</dbReference>
<dbReference type="GO" id="GO:0006275">
    <property type="term" value="P:regulation of DNA replication"/>
    <property type="evidence" value="ECO:0007669"/>
    <property type="project" value="UniProtKB-UniRule"/>
</dbReference>
<dbReference type="CDD" id="cd00577">
    <property type="entry name" value="PCNA"/>
    <property type="match status" value="1"/>
</dbReference>
<dbReference type="Gene3D" id="3.70.10.10">
    <property type="match status" value="1"/>
</dbReference>
<dbReference type="HAMAP" id="MF_00317">
    <property type="entry name" value="DNApol_clamp_arch"/>
    <property type="match status" value="1"/>
</dbReference>
<dbReference type="InterPro" id="IPR046938">
    <property type="entry name" value="DNA_clamp_sf"/>
</dbReference>
<dbReference type="InterPro" id="IPR000730">
    <property type="entry name" value="Pr_cel_nuc_antig"/>
</dbReference>
<dbReference type="InterPro" id="IPR022649">
    <property type="entry name" value="Pr_cel_nuc_antig_C"/>
</dbReference>
<dbReference type="InterPro" id="IPR022659">
    <property type="entry name" value="Pr_cel_nuc_antig_CS"/>
</dbReference>
<dbReference type="InterPro" id="IPR022648">
    <property type="entry name" value="Pr_cel_nuc_antig_N"/>
</dbReference>
<dbReference type="NCBIfam" id="NF002222">
    <property type="entry name" value="PRK01115.1-5"/>
    <property type="match status" value="1"/>
</dbReference>
<dbReference type="PANTHER" id="PTHR11352">
    <property type="entry name" value="PROLIFERATING CELL NUCLEAR ANTIGEN"/>
    <property type="match status" value="1"/>
</dbReference>
<dbReference type="PANTHER" id="PTHR11352:SF0">
    <property type="entry name" value="PROLIFERATING CELL NUCLEAR ANTIGEN"/>
    <property type="match status" value="1"/>
</dbReference>
<dbReference type="Pfam" id="PF02747">
    <property type="entry name" value="PCNA_C"/>
    <property type="match status" value="1"/>
</dbReference>
<dbReference type="Pfam" id="PF00705">
    <property type="entry name" value="PCNA_N"/>
    <property type="match status" value="1"/>
</dbReference>
<dbReference type="PRINTS" id="PR00339">
    <property type="entry name" value="PCNACYCLIN"/>
</dbReference>
<dbReference type="SUPFAM" id="SSF55979">
    <property type="entry name" value="DNA clamp"/>
    <property type="match status" value="2"/>
</dbReference>
<dbReference type="PROSITE" id="PS01251">
    <property type="entry name" value="PCNA_1"/>
    <property type="match status" value="1"/>
</dbReference>
<organism>
    <name type="scientific">Thermoplasma acidophilum (strain ATCC 25905 / DSM 1728 / JCM 9062 / NBRC 15155 / AMRC-C165)</name>
    <dbReference type="NCBI Taxonomy" id="273075"/>
    <lineage>
        <taxon>Archaea</taxon>
        <taxon>Methanobacteriati</taxon>
        <taxon>Thermoplasmatota</taxon>
        <taxon>Thermoplasmata</taxon>
        <taxon>Thermoplasmatales</taxon>
        <taxon>Thermoplasmataceae</taxon>
        <taxon>Thermoplasma</taxon>
    </lineage>
</organism>
<proteinExistence type="inferred from homology"/>
<sequence>MIRLNLSVKNLKEITDLLSTIVSEAKFRVDENGMSVTAVDPAHVAMIRLEVPKEAFVEFHTDGQEEIALDIDRLKSVIRLASSSENVGITKDGEKLKFELGTINKSISLLDPSTIVTPKIPNITSEYYAVLKKSDFERGLRAAEDISDSIRFTLSQDGFKAYSHSESEESEMILPKDLITDMSCNTTIKSSYPLEYLLKFIKAISSTDSLKLSFRDDYPLSVEFYLDQNPGAKIKGLFLLAPRMEQ</sequence>